<keyword id="KW-0413">Isomerase</keyword>
<keyword id="KW-0819">tRNA processing</keyword>
<evidence type="ECO:0000255" key="1">
    <source>
        <dbReference type="HAMAP-Rule" id="MF_01080"/>
    </source>
</evidence>
<protein>
    <recommendedName>
        <fullName evidence="1">tRNA pseudouridine synthase B</fullName>
        <ecNumber evidence="1">5.4.99.25</ecNumber>
    </recommendedName>
    <alternativeName>
        <fullName evidence="1">tRNA pseudouridine(55) synthase</fullName>
        <shortName evidence="1">Psi55 synthase</shortName>
    </alternativeName>
    <alternativeName>
        <fullName evidence="1">tRNA pseudouridylate synthase</fullName>
    </alternativeName>
    <alternativeName>
        <fullName evidence="1">tRNA-uridine isomerase</fullName>
    </alternativeName>
</protein>
<accession>Q31W45</accession>
<proteinExistence type="inferred from homology"/>
<gene>
    <name evidence="1" type="primary">truB</name>
    <name type="ordered locus">SBO_3216</name>
</gene>
<name>TRUB_SHIBS</name>
<comment type="function">
    <text evidence="1">Responsible for synthesis of pseudouridine from uracil-55 in the psi GC loop of transfer RNAs.</text>
</comment>
<comment type="catalytic activity">
    <reaction evidence="1">
        <text>uridine(55) in tRNA = pseudouridine(55) in tRNA</text>
        <dbReference type="Rhea" id="RHEA:42532"/>
        <dbReference type="Rhea" id="RHEA-COMP:10101"/>
        <dbReference type="Rhea" id="RHEA-COMP:10102"/>
        <dbReference type="ChEBI" id="CHEBI:65314"/>
        <dbReference type="ChEBI" id="CHEBI:65315"/>
        <dbReference type="EC" id="5.4.99.25"/>
    </reaction>
</comment>
<comment type="similarity">
    <text evidence="1">Belongs to the pseudouridine synthase TruB family. Type 1 subfamily.</text>
</comment>
<organism>
    <name type="scientific">Shigella boydii serotype 4 (strain Sb227)</name>
    <dbReference type="NCBI Taxonomy" id="300268"/>
    <lineage>
        <taxon>Bacteria</taxon>
        <taxon>Pseudomonadati</taxon>
        <taxon>Pseudomonadota</taxon>
        <taxon>Gammaproteobacteria</taxon>
        <taxon>Enterobacterales</taxon>
        <taxon>Enterobacteriaceae</taxon>
        <taxon>Shigella</taxon>
    </lineage>
</organism>
<reference key="1">
    <citation type="journal article" date="2005" name="Nucleic Acids Res.">
        <title>Genome dynamics and diversity of Shigella species, the etiologic agents of bacillary dysentery.</title>
        <authorList>
            <person name="Yang F."/>
            <person name="Yang J."/>
            <person name="Zhang X."/>
            <person name="Chen L."/>
            <person name="Jiang Y."/>
            <person name="Yan Y."/>
            <person name="Tang X."/>
            <person name="Wang J."/>
            <person name="Xiong Z."/>
            <person name="Dong J."/>
            <person name="Xue Y."/>
            <person name="Zhu Y."/>
            <person name="Xu X."/>
            <person name="Sun L."/>
            <person name="Chen S."/>
            <person name="Nie H."/>
            <person name="Peng J."/>
            <person name="Xu J."/>
            <person name="Wang Y."/>
            <person name="Yuan Z."/>
            <person name="Wen Y."/>
            <person name="Yao Z."/>
            <person name="Shen Y."/>
            <person name="Qiang B."/>
            <person name="Hou Y."/>
            <person name="Yu J."/>
            <person name="Jin Q."/>
        </authorList>
    </citation>
    <scope>NUCLEOTIDE SEQUENCE [LARGE SCALE GENOMIC DNA]</scope>
    <source>
        <strain>Sb227</strain>
    </source>
</reference>
<dbReference type="EC" id="5.4.99.25" evidence="1"/>
<dbReference type="EMBL" id="CP000036">
    <property type="protein sequence ID" value="ABB67713.1"/>
    <property type="molecule type" value="Genomic_DNA"/>
</dbReference>
<dbReference type="RefSeq" id="WP_000089687.1">
    <property type="nucleotide sequence ID" value="NC_007613.1"/>
</dbReference>
<dbReference type="SMR" id="Q31W45"/>
<dbReference type="KEGG" id="sbo:SBO_3216"/>
<dbReference type="HOGENOM" id="CLU_032087_0_3_6"/>
<dbReference type="Proteomes" id="UP000007067">
    <property type="component" value="Chromosome"/>
</dbReference>
<dbReference type="GO" id="GO:0003723">
    <property type="term" value="F:RNA binding"/>
    <property type="evidence" value="ECO:0007669"/>
    <property type="project" value="InterPro"/>
</dbReference>
<dbReference type="GO" id="GO:0160148">
    <property type="term" value="F:tRNA pseudouridine(55) synthase activity"/>
    <property type="evidence" value="ECO:0007669"/>
    <property type="project" value="UniProtKB-EC"/>
</dbReference>
<dbReference type="GO" id="GO:1990481">
    <property type="term" value="P:mRNA pseudouridine synthesis"/>
    <property type="evidence" value="ECO:0007669"/>
    <property type="project" value="TreeGrafter"/>
</dbReference>
<dbReference type="GO" id="GO:0031119">
    <property type="term" value="P:tRNA pseudouridine synthesis"/>
    <property type="evidence" value="ECO:0007669"/>
    <property type="project" value="UniProtKB-UniRule"/>
</dbReference>
<dbReference type="CDD" id="cd02573">
    <property type="entry name" value="PseudoU_synth_EcTruB"/>
    <property type="match status" value="1"/>
</dbReference>
<dbReference type="CDD" id="cd21152">
    <property type="entry name" value="PUA_TruB_bacterial"/>
    <property type="match status" value="1"/>
</dbReference>
<dbReference type="FunFam" id="2.30.130.10:FF:000004">
    <property type="entry name" value="tRNA pseudouridine synthase B"/>
    <property type="match status" value="1"/>
</dbReference>
<dbReference type="FunFam" id="3.30.2350.10:FF:000003">
    <property type="entry name" value="tRNA pseudouridine synthase B"/>
    <property type="match status" value="1"/>
</dbReference>
<dbReference type="Gene3D" id="3.30.2350.10">
    <property type="entry name" value="Pseudouridine synthase"/>
    <property type="match status" value="1"/>
</dbReference>
<dbReference type="Gene3D" id="2.30.130.10">
    <property type="entry name" value="PUA domain"/>
    <property type="match status" value="1"/>
</dbReference>
<dbReference type="HAMAP" id="MF_01080">
    <property type="entry name" value="TruB_bact"/>
    <property type="match status" value="1"/>
</dbReference>
<dbReference type="InterPro" id="IPR020103">
    <property type="entry name" value="PsdUridine_synth_cat_dom_sf"/>
</dbReference>
<dbReference type="InterPro" id="IPR002501">
    <property type="entry name" value="PsdUridine_synth_N"/>
</dbReference>
<dbReference type="InterPro" id="IPR015947">
    <property type="entry name" value="PUA-like_sf"/>
</dbReference>
<dbReference type="InterPro" id="IPR036974">
    <property type="entry name" value="PUA_sf"/>
</dbReference>
<dbReference type="InterPro" id="IPR014780">
    <property type="entry name" value="tRNA_psdUridine_synth_TruB"/>
</dbReference>
<dbReference type="InterPro" id="IPR015240">
    <property type="entry name" value="tRNA_sdUridine_synth_fam1_C"/>
</dbReference>
<dbReference type="InterPro" id="IPR032819">
    <property type="entry name" value="TruB_C"/>
</dbReference>
<dbReference type="NCBIfam" id="TIGR00431">
    <property type="entry name" value="TruB"/>
    <property type="match status" value="1"/>
</dbReference>
<dbReference type="PANTHER" id="PTHR13767:SF2">
    <property type="entry name" value="PSEUDOURIDYLATE SYNTHASE TRUB1"/>
    <property type="match status" value="1"/>
</dbReference>
<dbReference type="PANTHER" id="PTHR13767">
    <property type="entry name" value="TRNA-PSEUDOURIDINE SYNTHASE"/>
    <property type="match status" value="1"/>
</dbReference>
<dbReference type="Pfam" id="PF09157">
    <property type="entry name" value="TruB-C_2"/>
    <property type="match status" value="1"/>
</dbReference>
<dbReference type="Pfam" id="PF16198">
    <property type="entry name" value="TruB_C_2"/>
    <property type="match status" value="1"/>
</dbReference>
<dbReference type="Pfam" id="PF01509">
    <property type="entry name" value="TruB_N"/>
    <property type="match status" value="1"/>
</dbReference>
<dbReference type="SUPFAM" id="SSF55120">
    <property type="entry name" value="Pseudouridine synthase"/>
    <property type="match status" value="1"/>
</dbReference>
<dbReference type="SUPFAM" id="SSF88697">
    <property type="entry name" value="PUA domain-like"/>
    <property type="match status" value="1"/>
</dbReference>
<feature type="chain" id="PRO_0000229381" description="tRNA pseudouridine synthase B">
    <location>
        <begin position="1"/>
        <end position="314"/>
    </location>
</feature>
<feature type="active site" description="Nucleophile" evidence="1">
    <location>
        <position position="48"/>
    </location>
</feature>
<feature type="binding site" evidence="1">
    <location>
        <position position="43"/>
    </location>
    <ligand>
        <name>substrate</name>
    </ligand>
</feature>
<feature type="binding site" evidence="1">
    <location>
        <position position="76"/>
    </location>
    <ligand>
        <name>substrate</name>
    </ligand>
</feature>
<feature type="binding site" evidence="1">
    <location>
        <position position="179"/>
    </location>
    <ligand>
        <name>substrate</name>
    </ligand>
</feature>
<feature type="binding site" evidence="1">
    <location>
        <position position="200"/>
    </location>
    <ligand>
        <name>substrate</name>
    </ligand>
</feature>
<sequence>MSRPRRRGRDINGVLLLDKPQGMSSNDALQKVKRIYNANRAGHTGALDPLATGMLPICFGEATKFSQYLLDSDKRYRVIARLGQRTDTSDADGQIVEERPVTFSAEQLAAALDTFRGDIEQIPSMYSALKYQGKKLYEYARQGIEVPREARPITIYELLFIRHEGNELELEIHCSKGTYIRTIIDDLGEKLGCGAHVIYLRRLAVSKYPVERMVTLEHLRELVEQAEQQDIPAAELLDPLLMPMDSPASDYPVVNLPLTSSVYFKNGNPVRTSGAPLEGLVRVTEGENGKFIGMGEIDDEGRVAPRRLVVEYPA</sequence>